<accession>B5FKY7</accession>
<organism>
    <name type="scientific">Salmonella dublin (strain CT_02021853)</name>
    <dbReference type="NCBI Taxonomy" id="439851"/>
    <lineage>
        <taxon>Bacteria</taxon>
        <taxon>Pseudomonadati</taxon>
        <taxon>Pseudomonadota</taxon>
        <taxon>Gammaproteobacteria</taxon>
        <taxon>Enterobacterales</taxon>
        <taxon>Enterobacteriaceae</taxon>
        <taxon>Salmonella</taxon>
    </lineage>
</organism>
<dbReference type="EC" id="2.4.2.7" evidence="1"/>
<dbReference type="EMBL" id="CP001144">
    <property type="protein sequence ID" value="ACH75029.1"/>
    <property type="molecule type" value="Genomic_DNA"/>
</dbReference>
<dbReference type="RefSeq" id="WP_000127350.1">
    <property type="nucleotide sequence ID" value="NC_011205.1"/>
</dbReference>
<dbReference type="SMR" id="B5FKY7"/>
<dbReference type="KEGG" id="sed:SeD_A0527"/>
<dbReference type="HOGENOM" id="CLU_063339_3_0_6"/>
<dbReference type="UniPathway" id="UPA00588">
    <property type="reaction ID" value="UER00646"/>
</dbReference>
<dbReference type="Proteomes" id="UP000008322">
    <property type="component" value="Chromosome"/>
</dbReference>
<dbReference type="GO" id="GO:0005829">
    <property type="term" value="C:cytosol"/>
    <property type="evidence" value="ECO:0007669"/>
    <property type="project" value="TreeGrafter"/>
</dbReference>
<dbReference type="GO" id="GO:0003999">
    <property type="term" value="F:adenine phosphoribosyltransferase activity"/>
    <property type="evidence" value="ECO:0007669"/>
    <property type="project" value="UniProtKB-UniRule"/>
</dbReference>
<dbReference type="GO" id="GO:0006168">
    <property type="term" value="P:adenine salvage"/>
    <property type="evidence" value="ECO:0007669"/>
    <property type="project" value="InterPro"/>
</dbReference>
<dbReference type="GO" id="GO:0044209">
    <property type="term" value="P:AMP salvage"/>
    <property type="evidence" value="ECO:0007669"/>
    <property type="project" value="UniProtKB-UniRule"/>
</dbReference>
<dbReference type="GO" id="GO:0006166">
    <property type="term" value="P:purine ribonucleoside salvage"/>
    <property type="evidence" value="ECO:0007669"/>
    <property type="project" value="UniProtKB-KW"/>
</dbReference>
<dbReference type="CDD" id="cd06223">
    <property type="entry name" value="PRTases_typeI"/>
    <property type="match status" value="1"/>
</dbReference>
<dbReference type="FunFam" id="3.40.50.2020:FF:000004">
    <property type="entry name" value="Adenine phosphoribosyltransferase"/>
    <property type="match status" value="1"/>
</dbReference>
<dbReference type="Gene3D" id="3.40.50.2020">
    <property type="match status" value="1"/>
</dbReference>
<dbReference type="HAMAP" id="MF_00004">
    <property type="entry name" value="Aden_phosphoribosyltr"/>
    <property type="match status" value="1"/>
</dbReference>
<dbReference type="InterPro" id="IPR005764">
    <property type="entry name" value="Ade_phspho_trans"/>
</dbReference>
<dbReference type="InterPro" id="IPR050120">
    <property type="entry name" value="Adenine_PRTase"/>
</dbReference>
<dbReference type="InterPro" id="IPR000836">
    <property type="entry name" value="PRibTrfase_dom"/>
</dbReference>
<dbReference type="InterPro" id="IPR029057">
    <property type="entry name" value="PRTase-like"/>
</dbReference>
<dbReference type="NCBIfam" id="TIGR01090">
    <property type="entry name" value="apt"/>
    <property type="match status" value="1"/>
</dbReference>
<dbReference type="NCBIfam" id="NF002632">
    <property type="entry name" value="PRK02304.1-1"/>
    <property type="match status" value="1"/>
</dbReference>
<dbReference type="NCBIfam" id="NF002634">
    <property type="entry name" value="PRK02304.1-3"/>
    <property type="match status" value="1"/>
</dbReference>
<dbReference type="NCBIfam" id="NF002636">
    <property type="entry name" value="PRK02304.1-5"/>
    <property type="match status" value="1"/>
</dbReference>
<dbReference type="PANTHER" id="PTHR11776">
    <property type="entry name" value="ADENINE PHOSPHORIBOSYLTRANSFERASE"/>
    <property type="match status" value="1"/>
</dbReference>
<dbReference type="PANTHER" id="PTHR11776:SF7">
    <property type="entry name" value="PHOSPHORIBOSYLTRANSFERASE DOMAIN-CONTAINING PROTEIN"/>
    <property type="match status" value="1"/>
</dbReference>
<dbReference type="Pfam" id="PF00156">
    <property type="entry name" value="Pribosyltran"/>
    <property type="match status" value="1"/>
</dbReference>
<dbReference type="SUPFAM" id="SSF53271">
    <property type="entry name" value="PRTase-like"/>
    <property type="match status" value="1"/>
</dbReference>
<dbReference type="PROSITE" id="PS00103">
    <property type="entry name" value="PUR_PYR_PR_TRANSFER"/>
    <property type="match status" value="1"/>
</dbReference>
<proteinExistence type="inferred from homology"/>
<feature type="chain" id="PRO_1000088999" description="Adenine phosphoribosyltransferase">
    <location>
        <begin position="1"/>
        <end position="183"/>
    </location>
</feature>
<evidence type="ECO:0000255" key="1">
    <source>
        <dbReference type="HAMAP-Rule" id="MF_00004"/>
    </source>
</evidence>
<comment type="function">
    <text evidence="1">Catalyzes a salvage reaction resulting in the formation of AMP, that is energically less costly than de novo synthesis.</text>
</comment>
<comment type="catalytic activity">
    <reaction evidence="1">
        <text>AMP + diphosphate = 5-phospho-alpha-D-ribose 1-diphosphate + adenine</text>
        <dbReference type="Rhea" id="RHEA:16609"/>
        <dbReference type="ChEBI" id="CHEBI:16708"/>
        <dbReference type="ChEBI" id="CHEBI:33019"/>
        <dbReference type="ChEBI" id="CHEBI:58017"/>
        <dbReference type="ChEBI" id="CHEBI:456215"/>
        <dbReference type="EC" id="2.4.2.7"/>
    </reaction>
</comment>
<comment type="pathway">
    <text evidence="1">Purine metabolism; AMP biosynthesis via salvage pathway; AMP from adenine: step 1/1.</text>
</comment>
<comment type="subunit">
    <text evidence="1">Homodimer.</text>
</comment>
<comment type="subcellular location">
    <subcellularLocation>
        <location evidence="1">Cytoplasm</location>
    </subcellularLocation>
</comment>
<comment type="similarity">
    <text evidence="1">Belongs to the purine/pyrimidine phosphoribosyltransferase family.</text>
</comment>
<gene>
    <name evidence="1" type="primary">apt</name>
    <name type="ordered locus">SeD_A0527</name>
</gene>
<name>APT_SALDC</name>
<keyword id="KW-0963">Cytoplasm</keyword>
<keyword id="KW-0328">Glycosyltransferase</keyword>
<keyword id="KW-0660">Purine salvage</keyword>
<keyword id="KW-0808">Transferase</keyword>
<reference key="1">
    <citation type="journal article" date="2011" name="J. Bacteriol.">
        <title>Comparative genomics of 28 Salmonella enterica isolates: evidence for CRISPR-mediated adaptive sublineage evolution.</title>
        <authorList>
            <person name="Fricke W.F."/>
            <person name="Mammel M.K."/>
            <person name="McDermott P.F."/>
            <person name="Tartera C."/>
            <person name="White D.G."/>
            <person name="Leclerc J.E."/>
            <person name="Ravel J."/>
            <person name="Cebula T.A."/>
        </authorList>
    </citation>
    <scope>NUCLEOTIDE SEQUENCE [LARGE SCALE GENOMIC DNA]</scope>
    <source>
        <strain>CT_02021853</strain>
    </source>
</reference>
<protein>
    <recommendedName>
        <fullName evidence="1">Adenine phosphoribosyltransferase</fullName>
        <shortName evidence="1">APRT</shortName>
        <ecNumber evidence="1">2.4.2.7</ecNumber>
    </recommendedName>
</protein>
<sequence length="183" mass="19985">MTATAQQLEFLKNSIKSIQDYPKPGILFRDVTSLLEDPKAYALSIELLVERYKNAGITKVVGTEARGFLFGAPVALGLGVGFVPVRKPRKLPRETIAETYELEYGTDQLEIHVDAIKPGDNVLVVDDLLATGGTIEATVKLIRRLGGKVTDAAFIINLFDLGGEQRLEKQGITCYSLVPFPGH</sequence>